<organism>
    <name type="scientific">Escherichia coli (strain K12 / DH10B)</name>
    <dbReference type="NCBI Taxonomy" id="316385"/>
    <lineage>
        <taxon>Bacteria</taxon>
        <taxon>Pseudomonadati</taxon>
        <taxon>Pseudomonadota</taxon>
        <taxon>Gammaproteobacteria</taxon>
        <taxon>Enterobacterales</taxon>
        <taxon>Enterobacteriaceae</taxon>
        <taxon>Escherichia</taxon>
    </lineage>
</organism>
<dbReference type="EC" id="4.3.2.3" evidence="1"/>
<dbReference type="EMBL" id="CP000948">
    <property type="protein sequence ID" value="ACB01630.1"/>
    <property type="molecule type" value="Genomic_DNA"/>
</dbReference>
<dbReference type="RefSeq" id="WP_000776377.1">
    <property type="nucleotide sequence ID" value="NC_010473.1"/>
</dbReference>
<dbReference type="SMR" id="B1XFU0"/>
<dbReference type="KEGG" id="ecd:ECDH10B_0461"/>
<dbReference type="HOGENOM" id="CLU_070848_1_1_6"/>
<dbReference type="UniPathway" id="UPA00395"/>
<dbReference type="GO" id="GO:0004848">
    <property type="term" value="F:ureidoglycolate hydrolase activity"/>
    <property type="evidence" value="ECO:0007669"/>
    <property type="project" value="InterPro"/>
</dbReference>
<dbReference type="GO" id="GO:0050385">
    <property type="term" value="F:ureidoglycolate lyase activity"/>
    <property type="evidence" value="ECO:0007669"/>
    <property type="project" value="UniProtKB-UniRule"/>
</dbReference>
<dbReference type="GO" id="GO:0000256">
    <property type="term" value="P:allantoin catabolic process"/>
    <property type="evidence" value="ECO:0007669"/>
    <property type="project" value="UniProtKB-UniRule"/>
</dbReference>
<dbReference type="GO" id="GO:0006145">
    <property type="term" value="P:purine nucleobase catabolic process"/>
    <property type="evidence" value="ECO:0007669"/>
    <property type="project" value="UniProtKB-UniRule"/>
</dbReference>
<dbReference type="CDD" id="cd20298">
    <property type="entry name" value="cupin_UAH"/>
    <property type="match status" value="1"/>
</dbReference>
<dbReference type="FunFam" id="2.60.120.480:FF:000001">
    <property type="entry name" value="Ureidoglycolate lyase"/>
    <property type="match status" value="1"/>
</dbReference>
<dbReference type="Gene3D" id="2.60.120.480">
    <property type="entry name" value="Ureidoglycolate hydrolase"/>
    <property type="match status" value="1"/>
</dbReference>
<dbReference type="HAMAP" id="MF_00616">
    <property type="entry name" value="Ureidogly_lyase"/>
    <property type="match status" value="1"/>
</dbReference>
<dbReference type="InterPro" id="IPR011051">
    <property type="entry name" value="RmlC_Cupin_sf"/>
</dbReference>
<dbReference type="InterPro" id="IPR047233">
    <property type="entry name" value="UAH_cupin"/>
</dbReference>
<dbReference type="InterPro" id="IPR007247">
    <property type="entry name" value="Ureidogly_lyase"/>
</dbReference>
<dbReference type="InterPro" id="IPR023525">
    <property type="entry name" value="Ureidogly_lyase_bac"/>
</dbReference>
<dbReference type="InterPro" id="IPR024060">
    <property type="entry name" value="Ureidoglycolate_lyase_dom_sf"/>
</dbReference>
<dbReference type="NCBIfam" id="NF002948">
    <property type="entry name" value="PRK03606.1-1"/>
    <property type="match status" value="1"/>
</dbReference>
<dbReference type="NCBIfam" id="NF009932">
    <property type="entry name" value="PRK13395.1"/>
    <property type="match status" value="1"/>
</dbReference>
<dbReference type="PANTHER" id="PTHR21221">
    <property type="entry name" value="UREIDOGLYCOLATE HYDROLASE"/>
    <property type="match status" value="1"/>
</dbReference>
<dbReference type="PANTHER" id="PTHR21221:SF1">
    <property type="entry name" value="UREIDOGLYCOLATE LYASE"/>
    <property type="match status" value="1"/>
</dbReference>
<dbReference type="Pfam" id="PF04115">
    <property type="entry name" value="Ureidogly_lyase"/>
    <property type="match status" value="1"/>
</dbReference>
<dbReference type="PIRSF" id="PIRSF017306">
    <property type="entry name" value="Ureidogly_hydro"/>
    <property type="match status" value="1"/>
</dbReference>
<dbReference type="SUPFAM" id="SSF51182">
    <property type="entry name" value="RmlC-like cupins"/>
    <property type="match status" value="1"/>
</dbReference>
<proteinExistence type="evidence at protein level"/>
<reference key="1">
    <citation type="journal article" date="2008" name="J. Bacteriol.">
        <title>The complete genome sequence of Escherichia coli DH10B: insights into the biology of a laboratory workhorse.</title>
        <authorList>
            <person name="Durfee T."/>
            <person name="Nelson R."/>
            <person name="Baldwin S."/>
            <person name="Plunkett G. III"/>
            <person name="Burland V."/>
            <person name="Mau B."/>
            <person name="Petrosino J.F."/>
            <person name="Qin X."/>
            <person name="Muzny D.M."/>
            <person name="Ayele M."/>
            <person name="Gibbs R.A."/>
            <person name="Csorgo B."/>
            <person name="Posfai G."/>
            <person name="Weinstock G.M."/>
            <person name="Blattner F.R."/>
        </authorList>
    </citation>
    <scope>NUCLEOTIDE SEQUENCE [LARGE SCALE GENOMIC DNA]</scope>
    <source>
        <strain>K12 / DH10B</strain>
    </source>
</reference>
<reference key="2">
    <citation type="journal article" date="2010" name="Nat. Chem. Biol.">
        <title>Ureide catabolism in Arabidopsis thaliana and Escherichia coli.</title>
        <authorList>
            <person name="Werner A.K."/>
            <person name="Romeis T."/>
            <person name="Witte C.P."/>
        </authorList>
    </citation>
    <scope>FUNCTION</scope>
    <scope>CATALYTIC ACTIVITY</scope>
    <source>
        <strain>K12 / DH10B</strain>
    </source>
</reference>
<gene>
    <name evidence="1" type="primary">allA</name>
    <name type="ordered locus">ECDH10B_0461</name>
</gene>
<comment type="function">
    <text evidence="1 2">Catalyzes the catabolism of the allantoin degradation intermediate (S)-ureidoglycolate, generating urea and glyoxylate. Involved in the anaerobic utilization of allantoin as sole nitrogen source. Reinforces the induction of genes involved in the degradation of allantoin and glyoxylate by producing glyoxylate.</text>
</comment>
<comment type="catalytic activity">
    <reaction evidence="1 2">
        <text>(S)-ureidoglycolate = urea + glyoxylate</text>
        <dbReference type="Rhea" id="RHEA:11304"/>
        <dbReference type="ChEBI" id="CHEBI:16199"/>
        <dbReference type="ChEBI" id="CHEBI:36655"/>
        <dbReference type="ChEBI" id="CHEBI:57296"/>
        <dbReference type="EC" id="4.3.2.3"/>
    </reaction>
</comment>
<comment type="cofactor">
    <cofactor evidence="1">
        <name>Ni(2+)</name>
        <dbReference type="ChEBI" id="CHEBI:49786"/>
    </cofactor>
</comment>
<comment type="pathway">
    <text evidence="1">Nitrogen metabolism; (S)-allantoin degradation.</text>
</comment>
<comment type="subunit">
    <text evidence="1">Homodimer.</text>
</comment>
<comment type="similarity">
    <text evidence="1">Belongs to the ureidoglycolate lyase family.</text>
</comment>
<sequence length="160" mass="18170">MKLQVLPLSQEAFSAYGDVIETQQRDFFHINNGLVERYHDLALVEILEQDCTLISINRAQPANLPLTIHELERHPLGTQAFIPMKGEVFVVVVALGDDKPDLSTLRAFITNGEQGVNYHRNVWHHPLFAWQRVTDFLTIDRGGSDNCDVESIPEQELCFA</sequence>
<protein>
    <recommendedName>
        <fullName evidence="1">Ureidoglycolate lyase</fullName>
        <ecNumber evidence="1">4.3.2.3</ecNumber>
    </recommendedName>
    <alternativeName>
        <fullName evidence="1">Ureidoglycolatase</fullName>
    </alternativeName>
    <alternativeName>
        <fullName>Ureidoglycolate hydrolase</fullName>
    </alternativeName>
</protein>
<name>ALLA_ECODH</name>
<accession>B1XFU0</accession>
<evidence type="ECO:0000255" key="1">
    <source>
        <dbReference type="HAMAP-Rule" id="MF_00616"/>
    </source>
</evidence>
<evidence type="ECO:0000269" key="2">
    <source>
    </source>
</evidence>
<keyword id="KW-0456">Lyase</keyword>
<keyword id="KW-0659">Purine metabolism</keyword>
<feature type="chain" id="PRO_1000130414" description="Ureidoglycolate lyase">
    <location>
        <begin position="1"/>
        <end position="160"/>
    </location>
</feature>